<accession>Q8U248</accession>
<comment type="function">
    <text evidence="3 4">S-adenosyl-L-methionine-dependent methyltransferase that catalyzes the methylation of the guanosine nucleotide at position 6 (m2G6) in tRNA(Phe).</text>
</comment>
<comment type="catalytic activity">
    <reaction evidence="3 4">
        <text>guanosine(6) in tRNA + S-adenosyl-L-methionine = N(2)-methylguanosine(6) in tRNA + S-adenosyl-L-homocysteine + H(+)</text>
        <dbReference type="Rhea" id="RHEA:51116"/>
        <dbReference type="Rhea" id="RHEA-COMP:12888"/>
        <dbReference type="Rhea" id="RHEA-COMP:12889"/>
        <dbReference type="ChEBI" id="CHEBI:15378"/>
        <dbReference type="ChEBI" id="CHEBI:57856"/>
        <dbReference type="ChEBI" id="CHEBI:59789"/>
        <dbReference type="ChEBI" id="CHEBI:74269"/>
        <dbReference type="ChEBI" id="CHEBI:74481"/>
        <dbReference type="EC" id="2.1.1.256"/>
    </reaction>
</comment>
<comment type="subunit">
    <text evidence="2 4">Monomer in solution.</text>
</comment>
<comment type="subcellular location">
    <subcellularLocation>
        <location evidence="2">Cytoplasm</location>
    </subcellularLocation>
</comment>
<comment type="domain">
    <text evidence="4">Consists of an N-terminal THUMP domain fused to a catalytic Rossmann-fold MTase (RFM) domain.</text>
</comment>
<comment type="similarity">
    <text evidence="7">Belongs to the methyltransferase superfamily.</text>
</comment>
<organism>
    <name type="scientific">Pyrococcus furiosus (strain ATCC 43587 / DSM 3638 / JCM 8422 / Vc1)</name>
    <dbReference type="NCBI Taxonomy" id="186497"/>
    <lineage>
        <taxon>Archaea</taxon>
        <taxon>Methanobacteriati</taxon>
        <taxon>Methanobacteriota</taxon>
        <taxon>Thermococci</taxon>
        <taxon>Thermococcales</taxon>
        <taxon>Thermococcaceae</taxon>
        <taxon>Pyrococcus</taxon>
    </lineage>
</organism>
<sequence length="365" mass="41000">MKFLLTTAQGIEDIAKREVSLLLKKLGISFQIEEKPLGIEGRLLLEAEKAYYVDEKGRKRELSISTYLNENSRLLHRVIIEIASEKFNGIEKDESEEALKRIKDFVSSLPVEQFVKVSETFAVRSFRKGDHNITSIDIARTVGEAIFERLSRFGTPLVNLDHPAVIFRAELIKDVFFLGIDTTGDSSLHKRPWRVYDHPAHLKASIANAMIELAELDGGSVLDPMCGSGTILIELALRRYSGEIIGIEKYRKHLIGAEMNALAAGVLDKIKFIQGDATQLSQYVDSVDFAISNLPYGLKIGKKSMIPDLYMKFFNELAKVLEKRGVFITTEKKAIEEAIAENGFEIIHHRVIGHGGLMVHLYVVK</sequence>
<name>TRM14_PYRFU</name>
<proteinExistence type="evidence at protein level"/>
<reference key="1">
    <citation type="journal article" date="1999" name="Genetics">
        <title>Divergence of the hyperthermophilic archaea Pyrococcus furiosus and P. horikoshii inferred from complete genomic sequences.</title>
        <authorList>
            <person name="Maeder D.L."/>
            <person name="Weiss R.B."/>
            <person name="Dunn D.M."/>
            <person name="Cherry J.L."/>
            <person name="Gonzalez J.M."/>
            <person name="DiRuggiero J."/>
            <person name="Robb F.T."/>
        </authorList>
    </citation>
    <scope>NUCLEOTIDE SEQUENCE [LARGE SCALE GENOMIC DNA]</scope>
    <source>
        <strain>ATCC 43587 / DSM 3638 / JCM 8422 / Vc1</strain>
    </source>
</reference>
<reference key="2">
    <citation type="journal article" date="2011" name="Acta Crystallogr. F">
        <title>Crystallization and preliminary X-ray crystallographic analysis of putative tRNA-modification enzymes from Pyrococcus furiosus and Thermus thermophilus.</title>
        <authorList>
            <person name="Fislage M."/>
            <person name="Roovers M."/>
            <person name="Muennich S."/>
            <person name="Droogmans L."/>
            <person name="Versees W."/>
        </authorList>
    </citation>
    <scope>SUBUNIT</scope>
    <scope>SUBCELLULAR LOCATION</scope>
    <scope>CRYSTALLIZATION</scope>
</reference>
<reference key="3">
    <citation type="journal article" date="2012" name="RNA">
        <title>The open reading frame TTC1157 of Thermus thermophilus HB27 encodes the methyltransferase forming N2-methylguanosine at position 6 in tRNA.</title>
        <authorList>
            <person name="Roovers M."/>
            <person name="Oudjama Y."/>
            <person name="Fislage M."/>
            <person name="Bujnicki J.M."/>
            <person name="Versees W."/>
            <person name="Droogmans L."/>
        </authorList>
    </citation>
    <scope>FUNCTION</scope>
    <scope>CATALYTIC ACTIVITY</scope>
</reference>
<reference evidence="9 10 11" key="4">
    <citation type="journal article" date="2012" name="Nucleic Acids Res.">
        <title>Crystal structures of the tRNA:m2G6 methyltransferase Trm14/TrmN from two domains of life.</title>
        <authorList>
            <person name="Fislage M."/>
            <person name="Roovers M."/>
            <person name="Tuszynska I."/>
            <person name="Bujnicki J.M."/>
            <person name="Droogmans L."/>
            <person name="Versees W."/>
        </authorList>
    </citation>
    <scope>X-RAY CRYSTALLOGRAPHY (1.95 ANGSTROMS) IN COMPLEXES WITH S-ADENOSYL-L-METHIONINE; S-ADENOSYL-HOMOCYSTEINE AND INHIBITOR SINEFUNGIN</scope>
    <scope>FUNCTION</scope>
    <scope>CATALYTIC ACTIVITY</scope>
    <scope>SUBUNIT</scope>
    <scope>DOMAIN</scope>
</reference>
<keyword id="KW-0002">3D-structure</keyword>
<keyword id="KW-0963">Cytoplasm</keyword>
<keyword id="KW-0489">Methyltransferase</keyword>
<keyword id="KW-1185">Reference proteome</keyword>
<keyword id="KW-0694">RNA-binding</keyword>
<keyword id="KW-0949">S-adenosyl-L-methionine</keyword>
<keyword id="KW-0808">Transferase</keyword>
<keyword id="KW-0819">tRNA processing</keyword>
<gene>
    <name evidence="5" type="primary">trm14</name>
    <name evidence="8" type="ordered locus">PF1002</name>
</gene>
<evidence type="ECO:0000255" key="1">
    <source>
        <dbReference type="PROSITE-ProRule" id="PRU00529"/>
    </source>
</evidence>
<evidence type="ECO:0000269" key="2">
    <source>
    </source>
</evidence>
<evidence type="ECO:0000269" key="3">
    <source>
    </source>
</evidence>
<evidence type="ECO:0000269" key="4">
    <source>
    </source>
</evidence>
<evidence type="ECO:0000303" key="5">
    <source>
    </source>
</evidence>
<evidence type="ECO:0000303" key="6">
    <source>
    </source>
</evidence>
<evidence type="ECO:0000305" key="7"/>
<evidence type="ECO:0000312" key="8">
    <source>
        <dbReference type="EMBL" id="AAL81126.1"/>
    </source>
</evidence>
<evidence type="ECO:0007744" key="9">
    <source>
        <dbReference type="PDB" id="3TLJ"/>
    </source>
</evidence>
<evidence type="ECO:0007744" key="10">
    <source>
        <dbReference type="PDB" id="3TM4"/>
    </source>
</evidence>
<evidence type="ECO:0007744" key="11">
    <source>
        <dbReference type="PDB" id="3TM5"/>
    </source>
</evidence>
<evidence type="ECO:0007829" key="12">
    <source>
        <dbReference type="PDB" id="3TM4"/>
    </source>
</evidence>
<protein>
    <recommendedName>
        <fullName evidence="7">tRNA (guanine(6)-N2)-methyltransferase</fullName>
        <ecNumber evidence="3 4">2.1.1.256</ecNumber>
    </recommendedName>
    <alternativeName>
        <fullName evidence="6">tRNA:m2G6 methyltransferase</fullName>
    </alternativeName>
</protein>
<feature type="chain" id="PRO_0000441405" description="tRNA (guanine(6)-N2)-methyltransferase">
    <location>
        <begin position="1"/>
        <end position="365"/>
    </location>
</feature>
<feature type="domain" description="THUMP" evidence="1">
    <location>
        <begin position="69"/>
        <end position="182"/>
    </location>
</feature>
<feature type="binding site" evidence="4 10">
    <location>
        <begin position="198"/>
        <end position="202"/>
    </location>
    <ligand>
        <name>S-adenosyl-L-methionine</name>
        <dbReference type="ChEBI" id="CHEBI:59789"/>
    </ligand>
</feature>
<feature type="binding site" evidence="4 10">
    <location>
        <begin position="228"/>
        <end position="230"/>
    </location>
    <ligand>
        <name>S-adenosyl-L-methionine</name>
        <dbReference type="ChEBI" id="CHEBI:59789"/>
    </ligand>
</feature>
<feature type="binding site" evidence="4 10">
    <location>
        <position position="248"/>
    </location>
    <ligand>
        <name>S-adenosyl-L-methionine</name>
        <dbReference type="ChEBI" id="CHEBI:59789"/>
    </ligand>
</feature>
<feature type="binding site" evidence="4 10">
    <location>
        <begin position="276"/>
        <end position="277"/>
    </location>
    <ligand>
        <name>S-adenosyl-L-methionine</name>
        <dbReference type="ChEBI" id="CHEBI:59789"/>
    </ligand>
</feature>
<feature type="binding site" evidence="4 10">
    <location>
        <position position="293"/>
    </location>
    <ligand>
        <name>S-adenosyl-L-methionine</name>
        <dbReference type="ChEBI" id="CHEBI:59789"/>
    </ligand>
</feature>
<feature type="strand" evidence="12">
    <location>
        <begin position="2"/>
        <end position="6"/>
    </location>
</feature>
<feature type="helix" evidence="12">
    <location>
        <begin position="12"/>
        <end position="24"/>
    </location>
</feature>
<feature type="turn" evidence="12">
    <location>
        <begin position="25"/>
        <end position="27"/>
    </location>
</feature>
<feature type="strand" evidence="12">
    <location>
        <begin position="30"/>
        <end position="35"/>
    </location>
</feature>
<feature type="helix" evidence="12">
    <location>
        <begin position="36"/>
        <end position="38"/>
    </location>
</feature>
<feature type="strand" evidence="12">
    <location>
        <begin position="42"/>
        <end position="47"/>
    </location>
</feature>
<feature type="strand" evidence="12">
    <location>
        <begin position="50"/>
        <end position="53"/>
    </location>
</feature>
<feature type="strand" evidence="12">
    <location>
        <begin position="59"/>
        <end position="62"/>
    </location>
</feature>
<feature type="helix" evidence="12">
    <location>
        <begin position="64"/>
        <end position="71"/>
    </location>
</feature>
<feature type="strand" evidence="12">
    <location>
        <begin position="76"/>
        <end position="86"/>
    </location>
</feature>
<feature type="turn" evidence="12">
    <location>
        <begin position="88"/>
        <end position="92"/>
    </location>
</feature>
<feature type="helix" evidence="12">
    <location>
        <begin position="95"/>
        <end position="107"/>
    </location>
</feature>
<feature type="helix" evidence="12">
    <location>
        <begin position="111"/>
        <end position="114"/>
    </location>
</feature>
<feature type="strand" evidence="12">
    <location>
        <begin position="119"/>
        <end position="130"/>
    </location>
</feature>
<feature type="helix" evidence="12">
    <location>
        <begin position="135"/>
        <end position="151"/>
    </location>
</feature>
<feature type="strand" evidence="12">
    <location>
        <begin position="160"/>
        <end position="162"/>
    </location>
</feature>
<feature type="strand" evidence="12">
    <location>
        <begin position="164"/>
        <end position="172"/>
    </location>
</feature>
<feature type="strand" evidence="12">
    <location>
        <begin position="175"/>
        <end position="183"/>
    </location>
</feature>
<feature type="helix" evidence="12">
    <location>
        <begin position="204"/>
        <end position="214"/>
    </location>
</feature>
<feature type="strand" evidence="12">
    <location>
        <begin position="221"/>
        <end position="223"/>
    </location>
</feature>
<feature type="helix" evidence="12">
    <location>
        <begin position="230"/>
        <end position="237"/>
    </location>
</feature>
<feature type="strand" evidence="12">
    <location>
        <begin position="244"/>
        <end position="249"/>
    </location>
</feature>
<feature type="helix" evidence="12">
    <location>
        <begin position="251"/>
        <end position="263"/>
    </location>
</feature>
<feature type="helix" evidence="12">
    <location>
        <begin position="267"/>
        <end position="269"/>
    </location>
</feature>
<feature type="strand" evidence="12">
    <location>
        <begin position="271"/>
        <end position="274"/>
    </location>
</feature>
<feature type="helix" evidence="12">
    <location>
        <begin position="277"/>
        <end position="282"/>
    </location>
</feature>
<feature type="strand" evidence="12">
    <location>
        <begin position="287"/>
        <end position="293"/>
    </location>
</feature>
<feature type="helix" evidence="12">
    <location>
        <begin position="306"/>
        <end position="320"/>
    </location>
</feature>
<feature type="strand" evidence="12">
    <location>
        <begin position="321"/>
        <end position="330"/>
    </location>
</feature>
<feature type="helix" evidence="12">
    <location>
        <begin position="332"/>
        <end position="341"/>
    </location>
</feature>
<feature type="strand" evidence="12">
    <location>
        <begin position="344"/>
        <end position="354"/>
    </location>
</feature>
<feature type="strand" evidence="12">
    <location>
        <begin position="357"/>
        <end position="365"/>
    </location>
</feature>
<dbReference type="EC" id="2.1.1.256" evidence="3 4"/>
<dbReference type="EMBL" id="AE009950">
    <property type="protein sequence ID" value="AAL81126.1"/>
    <property type="molecule type" value="Genomic_DNA"/>
</dbReference>
<dbReference type="RefSeq" id="WP_011012139.1">
    <property type="nucleotide sequence ID" value="NZ_CP023154.1"/>
</dbReference>
<dbReference type="PDB" id="3TLJ">
    <property type="method" value="X-ray"/>
    <property type="resolution" value="2.20 A"/>
    <property type="chains" value="A/B=1-365"/>
</dbReference>
<dbReference type="PDB" id="3TM4">
    <property type="method" value="X-ray"/>
    <property type="resolution" value="1.95 A"/>
    <property type="chains" value="A/B=1-365"/>
</dbReference>
<dbReference type="PDB" id="3TM5">
    <property type="method" value="X-ray"/>
    <property type="resolution" value="2.27 A"/>
    <property type="chains" value="A/B=1-365"/>
</dbReference>
<dbReference type="PDBsum" id="3TLJ"/>
<dbReference type="PDBsum" id="3TM4"/>
<dbReference type="PDBsum" id="3TM5"/>
<dbReference type="SMR" id="Q8U248"/>
<dbReference type="STRING" id="186497.PF1002"/>
<dbReference type="PaxDb" id="186497-PF1002"/>
<dbReference type="GeneID" id="41712814"/>
<dbReference type="KEGG" id="pfu:PF1002"/>
<dbReference type="PATRIC" id="fig|186497.12.peg.1061"/>
<dbReference type="eggNOG" id="arCOG00048">
    <property type="taxonomic scope" value="Archaea"/>
</dbReference>
<dbReference type="HOGENOM" id="CLU_032119_0_0_2"/>
<dbReference type="OrthoDB" id="7080at2157"/>
<dbReference type="PhylomeDB" id="Q8U248"/>
<dbReference type="BRENDA" id="2.1.1.256">
    <property type="organism ID" value="5243"/>
</dbReference>
<dbReference type="EvolutionaryTrace" id="Q8U248"/>
<dbReference type="Proteomes" id="UP000001013">
    <property type="component" value="Chromosome"/>
</dbReference>
<dbReference type="GO" id="GO:0005737">
    <property type="term" value="C:cytoplasm"/>
    <property type="evidence" value="ECO:0007669"/>
    <property type="project" value="UniProtKB-SubCell"/>
</dbReference>
<dbReference type="GO" id="GO:0003723">
    <property type="term" value="F:RNA binding"/>
    <property type="evidence" value="ECO:0007669"/>
    <property type="project" value="UniProtKB-KW"/>
</dbReference>
<dbReference type="GO" id="GO:0160117">
    <property type="term" value="F:tRNA (guanine(6)-N2)-methyltransferase activity"/>
    <property type="evidence" value="ECO:0007669"/>
    <property type="project" value="UniProtKB-EC"/>
</dbReference>
<dbReference type="GO" id="GO:0030488">
    <property type="term" value="P:tRNA methylation"/>
    <property type="evidence" value="ECO:0007669"/>
    <property type="project" value="TreeGrafter"/>
</dbReference>
<dbReference type="CDD" id="cd02440">
    <property type="entry name" value="AdoMet_MTases"/>
    <property type="match status" value="1"/>
</dbReference>
<dbReference type="CDD" id="cd11715">
    <property type="entry name" value="THUMP_AdoMetMT"/>
    <property type="match status" value="1"/>
</dbReference>
<dbReference type="Gene3D" id="3.30.2130.30">
    <property type="match status" value="1"/>
</dbReference>
<dbReference type="Gene3D" id="3.40.50.150">
    <property type="entry name" value="Vaccinia Virus protein VP39"/>
    <property type="match status" value="1"/>
</dbReference>
<dbReference type="InterPro" id="IPR000241">
    <property type="entry name" value="RlmKL-like_Mtase"/>
</dbReference>
<dbReference type="InterPro" id="IPR053943">
    <property type="entry name" value="RlmKL-like_Mtase_CS"/>
</dbReference>
<dbReference type="InterPro" id="IPR029063">
    <property type="entry name" value="SAM-dependent_MTases_sf"/>
</dbReference>
<dbReference type="InterPro" id="IPR004114">
    <property type="entry name" value="THUMP_dom"/>
</dbReference>
<dbReference type="InterPro" id="IPR053796">
    <property type="entry name" value="Trm14-like"/>
</dbReference>
<dbReference type="NCBIfam" id="NF040850">
    <property type="entry name" value="Trm14_Thcoccales"/>
    <property type="match status" value="1"/>
</dbReference>
<dbReference type="PANTHER" id="PTHR14911">
    <property type="entry name" value="THUMP DOMAIN-CONTAINING"/>
    <property type="match status" value="1"/>
</dbReference>
<dbReference type="PANTHER" id="PTHR14911:SF13">
    <property type="entry name" value="TRNA (GUANINE(6)-N2)-METHYLTRANSFERASE THUMP3"/>
    <property type="match status" value="1"/>
</dbReference>
<dbReference type="Pfam" id="PF02926">
    <property type="entry name" value="THUMP"/>
    <property type="match status" value="1"/>
</dbReference>
<dbReference type="Pfam" id="PF01170">
    <property type="entry name" value="UPF0020"/>
    <property type="match status" value="1"/>
</dbReference>
<dbReference type="SMART" id="SM00981">
    <property type="entry name" value="THUMP"/>
    <property type="match status" value="1"/>
</dbReference>
<dbReference type="SUPFAM" id="SSF53335">
    <property type="entry name" value="S-adenosyl-L-methionine-dependent methyltransferases"/>
    <property type="match status" value="1"/>
</dbReference>
<dbReference type="SUPFAM" id="SSF143437">
    <property type="entry name" value="THUMP domain-like"/>
    <property type="match status" value="1"/>
</dbReference>
<dbReference type="PROSITE" id="PS51165">
    <property type="entry name" value="THUMP"/>
    <property type="match status" value="1"/>
</dbReference>
<dbReference type="PROSITE" id="PS01261">
    <property type="entry name" value="UPF0020"/>
    <property type="match status" value="1"/>
</dbReference>